<accession>A5N7T6</accession>
<comment type="similarity">
    <text evidence="1">Belongs to the UPF0297 family.</text>
</comment>
<organism>
    <name type="scientific">Clostridium kluyveri (strain ATCC 8527 / DSM 555 / NBRC 12016 / NCIMB 10680 / K1)</name>
    <dbReference type="NCBI Taxonomy" id="431943"/>
    <lineage>
        <taxon>Bacteria</taxon>
        <taxon>Bacillati</taxon>
        <taxon>Bacillota</taxon>
        <taxon>Clostridia</taxon>
        <taxon>Eubacteriales</taxon>
        <taxon>Clostridiaceae</taxon>
        <taxon>Clostridium</taxon>
    </lineage>
</organism>
<proteinExistence type="inferred from homology"/>
<evidence type="ECO:0000255" key="1">
    <source>
        <dbReference type="HAMAP-Rule" id="MF_01507"/>
    </source>
</evidence>
<feature type="chain" id="PRO_1000087519" description="UPF0297 protein CKL_1325">
    <location>
        <begin position="1"/>
        <end position="83"/>
    </location>
</feature>
<protein>
    <recommendedName>
        <fullName evidence="1">UPF0297 protein CKL_1325</fullName>
    </recommendedName>
</protein>
<keyword id="KW-1185">Reference proteome</keyword>
<reference key="1">
    <citation type="journal article" date="2008" name="Proc. Natl. Acad. Sci. U.S.A.">
        <title>The genome of Clostridium kluyveri, a strict anaerobe with unique metabolic features.</title>
        <authorList>
            <person name="Seedorf H."/>
            <person name="Fricke W.F."/>
            <person name="Veith B."/>
            <person name="Brueggemann H."/>
            <person name="Liesegang H."/>
            <person name="Strittmatter A."/>
            <person name="Miethke M."/>
            <person name="Buckel W."/>
            <person name="Hinderberger J."/>
            <person name="Li F."/>
            <person name="Hagemeier C."/>
            <person name="Thauer R.K."/>
            <person name="Gottschalk G."/>
        </authorList>
    </citation>
    <scope>NUCLEOTIDE SEQUENCE [LARGE SCALE GENOMIC DNA]</scope>
    <source>
        <strain>ATCC 8527 / DSM 555 / NBRC 12016 / NCIMB 10680 / K1</strain>
    </source>
</reference>
<name>Y1325_CLOK5</name>
<gene>
    <name type="ordered locus">CKL_1325</name>
</gene>
<dbReference type="EMBL" id="CP000673">
    <property type="protein sequence ID" value="EDK33367.1"/>
    <property type="molecule type" value="Genomic_DNA"/>
</dbReference>
<dbReference type="RefSeq" id="WP_012101712.1">
    <property type="nucleotide sequence ID" value="NC_009706.1"/>
</dbReference>
<dbReference type="SMR" id="A5N7T6"/>
<dbReference type="STRING" id="431943.CKL_1325"/>
<dbReference type="KEGG" id="ckl:CKL_1325"/>
<dbReference type="eggNOG" id="COG4472">
    <property type="taxonomic scope" value="Bacteria"/>
</dbReference>
<dbReference type="HOGENOM" id="CLU_162466_0_0_9"/>
<dbReference type="Proteomes" id="UP000002411">
    <property type="component" value="Chromosome"/>
</dbReference>
<dbReference type="HAMAP" id="MF_01507">
    <property type="entry name" value="UPF0297"/>
    <property type="match status" value="1"/>
</dbReference>
<dbReference type="InterPro" id="IPR009309">
    <property type="entry name" value="IreB"/>
</dbReference>
<dbReference type="NCBIfam" id="NF003997">
    <property type="entry name" value="PRK05473.1"/>
    <property type="match status" value="1"/>
</dbReference>
<dbReference type="PANTHER" id="PTHR40067">
    <property type="entry name" value="UPF0297 PROTEIN YRZL"/>
    <property type="match status" value="1"/>
</dbReference>
<dbReference type="PANTHER" id="PTHR40067:SF1">
    <property type="entry name" value="UPF0297 PROTEIN YRZL"/>
    <property type="match status" value="1"/>
</dbReference>
<dbReference type="Pfam" id="PF06135">
    <property type="entry name" value="IreB"/>
    <property type="match status" value="1"/>
</dbReference>
<dbReference type="PIRSF" id="PIRSF037258">
    <property type="entry name" value="DUF965_bac"/>
    <property type="match status" value="1"/>
</dbReference>
<sequence>MSKDNTIQFDISESKKALTREILTEVYDSLIKKGYNPVNQLVGYLISGDPTYITNYNGARSLVRKLERDEILEEVLKAYLGIK</sequence>